<proteinExistence type="inferred from homology"/>
<keyword id="KW-0131">Cell cycle</keyword>
<keyword id="KW-0132">Cell division</keyword>
<keyword id="KW-0963">Cytoplasm</keyword>
<keyword id="KW-0206">Cytoskeleton</keyword>
<keyword id="KW-0498">Mitosis</keyword>
<keyword id="KW-1185">Reference proteome</keyword>
<comment type="function">
    <text evidence="1">Part of a checkpoint which monitors spindle integrity and prevents premature exit from mitosis.</text>
</comment>
<comment type="subcellular location">
    <subcellularLocation>
        <location evidence="1">Cytoplasm</location>
        <location evidence="1">Cytoskeleton</location>
        <location evidence="1">Spindle pole</location>
    </subcellularLocation>
</comment>
<comment type="similarity">
    <text evidence="3">Belongs to the IBD2 family.</text>
</comment>
<organism>
    <name type="scientific">Vanderwaltozyma polyspora (strain ATCC 22028 / DSM 70294 / BCRC 21397 / CBS 2163 / NBRC 10782 / NRRL Y-8283 / UCD 57-17)</name>
    <name type="common">Kluyveromyces polysporus</name>
    <dbReference type="NCBI Taxonomy" id="436907"/>
    <lineage>
        <taxon>Eukaryota</taxon>
        <taxon>Fungi</taxon>
        <taxon>Dikarya</taxon>
        <taxon>Ascomycota</taxon>
        <taxon>Saccharomycotina</taxon>
        <taxon>Saccharomycetes</taxon>
        <taxon>Saccharomycetales</taxon>
        <taxon>Saccharomycetaceae</taxon>
        <taxon>Vanderwaltozyma</taxon>
    </lineage>
</organism>
<protein>
    <recommendedName>
        <fullName>Protein IBD2</fullName>
    </recommendedName>
</protein>
<sequence>MAKTQIRNGTSIEVVSEDGPLPINVMMQEGVKALTKILSDHLQDGQSVDNESHSMQFVFKNVNDALDEANYQNPEGNGDVKISEIKSDGESDVVNFEVQDMKRKTLDEDDSIEEYITDPQLHLDGDKGEIVFDYGSEIITDNPEGIGERISQMIESVLPNGFPRDSRGRLHAVVNGDELNITEETDIDVTYSNEPVTSGYIDGIEYNEDEDSYEHDGCCPHHHHQTQDQQNNRQYHHHHSRQTHSQSQHPLSKQPPTSSKYRNYNYHDYNYEDDQESIPVGNAPNFSMLMTGNHNLCLFCEYYMVFGEAPKNMIKWYNKNYGYDRLPQSSARNGNSRKSNR</sequence>
<feature type="chain" id="PRO_0000333338" description="Protein IBD2">
    <location>
        <begin position="1"/>
        <end position="341"/>
    </location>
</feature>
<feature type="region of interest" description="Disordered" evidence="2">
    <location>
        <begin position="211"/>
        <end position="264"/>
    </location>
</feature>
<feature type="compositionally biased region" description="Polar residues" evidence="2">
    <location>
        <begin position="250"/>
        <end position="260"/>
    </location>
</feature>
<accession>A7TMZ9</accession>
<reference key="1">
    <citation type="journal article" date="2007" name="Proc. Natl. Acad. Sci. U.S.A.">
        <title>Independent sorting-out of thousands of duplicated gene pairs in two yeast species descended from a whole-genome duplication.</title>
        <authorList>
            <person name="Scannell D.R."/>
            <person name="Frank A.C."/>
            <person name="Conant G.C."/>
            <person name="Byrne K.P."/>
            <person name="Woolfit M."/>
            <person name="Wolfe K.H."/>
        </authorList>
    </citation>
    <scope>NUCLEOTIDE SEQUENCE [LARGE SCALE GENOMIC DNA]</scope>
    <source>
        <strain>ATCC 22028 / DSM 70294 / BCRC 21397 / CBS 2163 / NBRC 10782 / NRRL Y-8283 / UCD 57-17</strain>
    </source>
</reference>
<dbReference type="EMBL" id="DS480426">
    <property type="protein sequence ID" value="EDO16387.1"/>
    <property type="molecule type" value="Genomic_DNA"/>
</dbReference>
<dbReference type="RefSeq" id="XP_001644245.1">
    <property type="nucleotide sequence ID" value="XM_001644195.1"/>
</dbReference>
<dbReference type="FunCoup" id="A7TMZ9">
    <property type="interactions" value="31"/>
</dbReference>
<dbReference type="GeneID" id="5544528"/>
<dbReference type="KEGG" id="vpo:Kpol_1051p37"/>
<dbReference type="eggNOG" id="ENOG502RXXW">
    <property type="taxonomic scope" value="Eukaryota"/>
</dbReference>
<dbReference type="HOGENOM" id="CLU_067888_0_0_1"/>
<dbReference type="InParanoid" id="A7TMZ9"/>
<dbReference type="OMA" id="PKNMIKW"/>
<dbReference type="OrthoDB" id="4057723at2759"/>
<dbReference type="PhylomeDB" id="A7TMZ9"/>
<dbReference type="Proteomes" id="UP000000267">
    <property type="component" value="Unassembled WGS sequence"/>
</dbReference>
<dbReference type="GO" id="GO:0005737">
    <property type="term" value="C:cytoplasm"/>
    <property type="evidence" value="ECO:0007669"/>
    <property type="project" value="UniProtKB-KW"/>
</dbReference>
<dbReference type="GO" id="GO:0000922">
    <property type="term" value="C:spindle pole"/>
    <property type="evidence" value="ECO:0007669"/>
    <property type="project" value="UniProtKB-SubCell"/>
</dbReference>
<dbReference type="GO" id="GO:0051301">
    <property type="term" value="P:cell division"/>
    <property type="evidence" value="ECO:0007669"/>
    <property type="project" value="UniProtKB-KW"/>
</dbReference>
<dbReference type="GO" id="GO:0007094">
    <property type="term" value="P:mitotic spindle assembly checkpoint signaling"/>
    <property type="evidence" value="ECO:0007669"/>
    <property type="project" value="EnsemblFungi"/>
</dbReference>
<dbReference type="InterPro" id="IPR026231">
    <property type="entry name" value="IBD2"/>
</dbReference>
<dbReference type="PRINTS" id="PR02099">
    <property type="entry name" value="PROTEINIBD2"/>
</dbReference>
<evidence type="ECO:0000250" key="1"/>
<evidence type="ECO:0000256" key="2">
    <source>
        <dbReference type="SAM" id="MobiDB-lite"/>
    </source>
</evidence>
<evidence type="ECO:0000305" key="3"/>
<name>IBD2_VANPO</name>
<gene>
    <name type="primary">IBD2</name>
    <name type="ORF">Kpol_1051p37</name>
</gene>